<dbReference type="EMBL" id="AL079350">
    <property type="protein sequence ID" value="CAB45515.1"/>
    <property type="molecule type" value="Genomic_DNA"/>
</dbReference>
<dbReference type="EMBL" id="AL161563">
    <property type="protein sequence ID" value="CAB81349.1"/>
    <property type="molecule type" value="Genomic_DNA"/>
</dbReference>
<dbReference type="EMBL" id="CP002687">
    <property type="protein sequence ID" value="AEE85049.1"/>
    <property type="molecule type" value="Genomic_DNA"/>
</dbReference>
<dbReference type="EMBL" id="BT029305">
    <property type="protein sequence ID" value="ABK32119.1"/>
    <property type="molecule type" value="mRNA"/>
</dbReference>
<dbReference type="PIR" id="T10218">
    <property type="entry name" value="T10218"/>
</dbReference>
<dbReference type="RefSeq" id="NP_194268.1">
    <property type="nucleotide sequence ID" value="NM_118670.2"/>
</dbReference>
<dbReference type="SMR" id="Q9STJ9"/>
<dbReference type="BioGRID" id="13928">
    <property type="interactions" value="2"/>
</dbReference>
<dbReference type="IntAct" id="Q9STJ9">
    <property type="interactions" value="2"/>
</dbReference>
<dbReference type="STRING" id="3702.Q9STJ9"/>
<dbReference type="PaxDb" id="3702-AT4G25380.1"/>
<dbReference type="EnsemblPlants" id="AT4G25380.1">
    <property type="protein sequence ID" value="AT4G25380.1"/>
    <property type="gene ID" value="AT4G25380"/>
</dbReference>
<dbReference type="GeneID" id="828641"/>
<dbReference type="Gramene" id="AT4G25380.1">
    <property type="protein sequence ID" value="AT4G25380.1"/>
    <property type="gene ID" value="AT4G25380"/>
</dbReference>
<dbReference type="KEGG" id="ath:AT4G25380"/>
<dbReference type="Araport" id="AT4G25380"/>
<dbReference type="TAIR" id="AT4G25380">
    <property type="gene designation" value="SAP10"/>
</dbReference>
<dbReference type="eggNOG" id="KOG3173">
    <property type="taxonomic scope" value="Eukaryota"/>
</dbReference>
<dbReference type="HOGENOM" id="CLU_057016_5_3_1"/>
<dbReference type="InParanoid" id="Q9STJ9"/>
<dbReference type="OMA" id="PETLNMC"/>
<dbReference type="PhylomeDB" id="Q9STJ9"/>
<dbReference type="PRO" id="PR:Q9STJ9"/>
<dbReference type="Proteomes" id="UP000006548">
    <property type="component" value="Chromosome 4"/>
</dbReference>
<dbReference type="ExpressionAtlas" id="Q9STJ9">
    <property type="expression patterns" value="baseline and differential"/>
</dbReference>
<dbReference type="GO" id="GO:0005737">
    <property type="term" value="C:cytoplasm"/>
    <property type="evidence" value="ECO:0000314"/>
    <property type="project" value="TAIR"/>
</dbReference>
<dbReference type="GO" id="GO:0005634">
    <property type="term" value="C:nucleus"/>
    <property type="evidence" value="ECO:0000314"/>
    <property type="project" value="TAIR"/>
</dbReference>
<dbReference type="GO" id="GO:0003677">
    <property type="term" value="F:DNA binding"/>
    <property type="evidence" value="ECO:0007669"/>
    <property type="project" value="InterPro"/>
</dbReference>
<dbReference type="GO" id="GO:0008270">
    <property type="term" value="F:zinc ion binding"/>
    <property type="evidence" value="ECO:0007669"/>
    <property type="project" value="UniProtKB-KW"/>
</dbReference>
<dbReference type="GO" id="GO:0070417">
    <property type="term" value="P:cellular response to cold"/>
    <property type="evidence" value="ECO:0000270"/>
    <property type="project" value="TAIR"/>
</dbReference>
<dbReference type="GO" id="GO:0034605">
    <property type="term" value="P:cellular response to heat"/>
    <property type="evidence" value="ECO:0000270"/>
    <property type="project" value="TAIR"/>
</dbReference>
<dbReference type="GO" id="GO:0071472">
    <property type="term" value="P:cellular response to salt stress"/>
    <property type="evidence" value="ECO:0000270"/>
    <property type="project" value="TAIR"/>
</dbReference>
<dbReference type="GO" id="GO:0010042">
    <property type="term" value="P:response to manganese ion"/>
    <property type="evidence" value="ECO:0000315"/>
    <property type="project" value="TAIR"/>
</dbReference>
<dbReference type="GO" id="GO:0010038">
    <property type="term" value="P:response to metal ion"/>
    <property type="evidence" value="ECO:0000270"/>
    <property type="project" value="TAIR"/>
</dbReference>
<dbReference type="GO" id="GO:0010045">
    <property type="term" value="P:response to nickel cation"/>
    <property type="evidence" value="ECO:0000315"/>
    <property type="project" value="TAIR"/>
</dbReference>
<dbReference type="GO" id="GO:0010043">
    <property type="term" value="P:response to zinc ion"/>
    <property type="evidence" value="ECO:0000315"/>
    <property type="project" value="TAIR"/>
</dbReference>
<dbReference type="FunFam" id="4.10.1110.10:FF:000001">
    <property type="entry name" value="Zinc finger AN1-type containing 6"/>
    <property type="match status" value="1"/>
</dbReference>
<dbReference type="Gene3D" id="1.20.5.4770">
    <property type="match status" value="1"/>
</dbReference>
<dbReference type="Gene3D" id="4.10.1110.10">
    <property type="entry name" value="AN1-like Zinc finger"/>
    <property type="match status" value="1"/>
</dbReference>
<dbReference type="InterPro" id="IPR035896">
    <property type="entry name" value="AN1-like_Znf"/>
</dbReference>
<dbReference type="InterPro" id="IPR050652">
    <property type="entry name" value="AN1_A20_ZnFinger"/>
</dbReference>
<dbReference type="InterPro" id="IPR002653">
    <property type="entry name" value="Znf_A20"/>
</dbReference>
<dbReference type="InterPro" id="IPR000058">
    <property type="entry name" value="Znf_AN1"/>
</dbReference>
<dbReference type="PANTHER" id="PTHR10634">
    <property type="entry name" value="AN1-TYPE ZINC FINGER PROTEIN"/>
    <property type="match status" value="1"/>
</dbReference>
<dbReference type="PANTHER" id="PTHR10634:SF117">
    <property type="entry name" value="ZINC FINGER A20 AND AN1 DOMAIN-CONTAINING STRESS-ASSOCIATED PROTEIN 10"/>
    <property type="match status" value="1"/>
</dbReference>
<dbReference type="Pfam" id="PF01754">
    <property type="entry name" value="zf-A20"/>
    <property type="match status" value="1"/>
</dbReference>
<dbReference type="Pfam" id="PF01428">
    <property type="entry name" value="zf-AN1"/>
    <property type="match status" value="1"/>
</dbReference>
<dbReference type="SMART" id="SM00259">
    <property type="entry name" value="ZnF_A20"/>
    <property type="match status" value="1"/>
</dbReference>
<dbReference type="SMART" id="SM00154">
    <property type="entry name" value="ZnF_AN1"/>
    <property type="match status" value="1"/>
</dbReference>
<dbReference type="SUPFAM" id="SSF118310">
    <property type="entry name" value="AN1-like Zinc finger"/>
    <property type="match status" value="1"/>
</dbReference>
<dbReference type="SUPFAM" id="SSF57716">
    <property type="entry name" value="Glucocorticoid receptor-like (DNA-binding domain)"/>
    <property type="match status" value="1"/>
</dbReference>
<dbReference type="PROSITE" id="PS51036">
    <property type="entry name" value="ZF_A20"/>
    <property type="match status" value="1"/>
</dbReference>
<dbReference type="PROSITE" id="PS51039">
    <property type="entry name" value="ZF_AN1"/>
    <property type="match status" value="1"/>
</dbReference>
<gene>
    <name type="primary">SAP10</name>
    <name type="ordered locus">At4g25380</name>
    <name type="ORF">T30C3.50</name>
</gene>
<evidence type="ECO:0000250" key="1"/>
<evidence type="ECO:0000255" key="2">
    <source>
        <dbReference type="PROSITE-ProRule" id="PRU00449"/>
    </source>
</evidence>
<evidence type="ECO:0000255" key="3">
    <source>
        <dbReference type="PROSITE-ProRule" id="PRU00451"/>
    </source>
</evidence>
<comment type="function">
    <text evidence="1">May be involved in environmental stress response.</text>
</comment>
<comment type="interaction">
    <interactant intactId="EBI-15192063">
        <id>Q9STJ9</id>
    </interactant>
    <interactant intactId="EBI-4451817">
        <id>Q9SY66</id>
        <label>FRS11</label>
    </interactant>
    <organismsDiffer>false</organismsDiffer>
    <experiments>3</experiments>
</comment>
<accession>Q9STJ9</accession>
<protein>
    <recommendedName>
        <fullName>Zinc finger A20 and AN1 domain-containing stress-associated protein 10</fullName>
        <shortName>AtSAP10</shortName>
    </recommendedName>
</protein>
<organism>
    <name type="scientific">Arabidopsis thaliana</name>
    <name type="common">Mouse-ear cress</name>
    <dbReference type="NCBI Taxonomy" id="3702"/>
    <lineage>
        <taxon>Eukaryota</taxon>
        <taxon>Viridiplantae</taxon>
        <taxon>Streptophyta</taxon>
        <taxon>Embryophyta</taxon>
        <taxon>Tracheophyta</taxon>
        <taxon>Spermatophyta</taxon>
        <taxon>Magnoliopsida</taxon>
        <taxon>eudicotyledons</taxon>
        <taxon>Gunneridae</taxon>
        <taxon>Pentapetalae</taxon>
        <taxon>rosids</taxon>
        <taxon>malvids</taxon>
        <taxon>Brassicales</taxon>
        <taxon>Brassicaceae</taxon>
        <taxon>Camelineae</taxon>
        <taxon>Arabidopsis</taxon>
    </lineage>
</organism>
<proteinExistence type="evidence at protein level"/>
<name>SAP10_ARATH</name>
<keyword id="KW-0479">Metal-binding</keyword>
<keyword id="KW-1185">Reference proteome</keyword>
<keyword id="KW-0862">Zinc</keyword>
<keyword id="KW-0863">Zinc-finger</keyword>
<feature type="chain" id="PRO_0000269861" description="Zinc finger A20 and AN1 domain-containing stress-associated protein 10">
    <location>
        <begin position="1"/>
        <end position="130"/>
    </location>
</feature>
<feature type="zinc finger region" description="A20-type" evidence="3">
    <location>
        <begin position="4"/>
        <end position="38"/>
    </location>
</feature>
<feature type="zinc finger region" description="AN1-type" evidence="2">
    <location>
        <begin position="65"/>
        <end position="111"/>
    </location>
</feature>
<feature type="binding site" evidence="3">
    <location>
        <position position="10"/>
    </location>
    <ligand>
        <name>Zn(2+)</name>
        <dbReference type="ChEBI" id="CHEBI:29105"/>
        <label>1</label>
    </ligand>
</feature>
<feature type="binding site" evidence="3">
    <location>
        <position position="14"/>
    </location>
    <ligand>
        <name>Zn(2+)</name>
        <dbReference type="ChEBI" id="CHEBI:29105"/>
        <label>1</label>
    </ligand>
</feature>
<feature type="binding site" evidence="3">
    <location>
        <position position="26"/>
    </location>
    <ligand>
        <name>Zn(2+)</name>
        <dbReference type="ChEBI" id="CHEBI:29105"/>
        <label>1</label>
    </ligand>
</feature>
<feature type="binding site" evidence="3">
    <location>
        <position position="29"/>
    </location>
    <ligand>
        <name>Zn(2+)</name>
        <dbReference type="ChEBI" id="CHEBI:29105"/>
        <label>1</label>
    </ligand>
</feature>
<feature type="binding site" evidence="2">
    <location>
        <position position="71"/>
    </location>
    <ligand>
        <name>Zn(2+)</name>
        <dbReference type="ChEBI" id="CHEBI:29105"/>
        <label>2</label>
    </ligand>
</feature>
<feature type="binding site" evidence="2">
    <location>
        <position position="74"/>
    </location>
    <ligand>
        <name>Zn(2+)</name>
        <dbReference type="ChEBI" id="CHEBI:29105"/>
        <label>2</label>
    </ligand>
</feature>
<feature type="binding site" evidence="2">
    <location>
        <position position="85"/>
    </location>
    <ligand>
        <name>Zn(2+)</name>
        <dbReference type="ChEBI" id="CHEBI:29105"/>
        <label>3</label>
    </ligand>
</feature>
<feature type="binding site" evidence="2">
    <location>
        <position position="87"/>
    </location>
    <ligand>
        <name>Zn(2+)</name>
        <dbReference type="ChEBI" id="CHEBI:29105"/>
        <label>3</label>
    </ligand>
</feature>
<feature type="binding site" evidence="2">
    <location>
        <position position="92"/>
    </location>
    <ligand>
        <name>Zn(2+)</name>
        <dbReference type="ChEBI" id="CHEBI:29105"/>
        <label>2</label>
    </ligand>
</feature>
<feature type="binding site" evidence="2">
    <location>
        <position position="95"/>
    </location>
    <ligand>
        <name>Zn(2+)</name>
        <dbReference type="ChEBI" id="CHEBI:29105"/>
        <label>2</label>
    </ligand>
</feature>
<feature type="binding site" evidence="2">
    <location>
        <position position="101"/>
    </location>
    <ligand>
        <name>Zn(2+)</name>
        <dbReference type="ChEBI" id="CHEBI:29105"/>
        <label>3</label>
    </ligand>
</feature>
<feature type="binding site" evidence="2">
    <location>
        <position position="103"/>
    </location>
    <ligand>
        <name>Zn(2+)</name>
        <dbReference type="ChEBI" id="CHEBI:29105"/>
        <label>3</label>
    </ligand>
</feature>
<reference key="1">
    <citation type="journal article" date="1999" name="Nature">
        <title>Sequence and analysis of chromosome 4 of the plant Arabidopsis thaliana.</title>
        <authorList>
            <person name="Mayer K.F.X."/>
            <person name="Schueller C."/>
            <person name="Wambutt R."/>
            <person name="Murphy G."/>
            <person name="Volckaert G."/>
            <person name="Pohl T."/>
            <person name="Duesterhoeft A."/>
            <person name="Stiekema W."/>
            <person name="Entian K.-D."/>
            <person name="Terryn N."/>
            <person name="Harris B."/>
            <person name="Ansorge W."/>
            <person name="Brandt P."/>
            <person name="Grivell L.A."/>
            <person name="Rieger M."/>
            <person name="Weichselgartner M."/>
            <person name="de Simone V."/>
            <person name="Obermaier B."/>
            <person name="Mache R."/>
            <person name="Mueller M."/>
            <person name="Kreis M."/>
            <person name="Delseny M."/>
            <person name="Puigdomenech P."/>
            <person name="Watson M."/>
            <person name="Schmidtheini T."/>
            <person name="Reichert B."/>
            <person name="Portetelle D."/>
            <person name="Perez-Alonso M."/>
            <person name="Boutry M."/>
            <person name="Bancroft I."/>
            <person name="Vos P."/>
            <person name="Hoheisel J."/>
            <person name="Zimmermann W."/>
            <person name="Wedler H."/>
            <person name="Ridley P."/>
            <person name="Langham S.-A."/>
            <person name="McCullagh B."/>
            <person name="Bilham L."/>
            <person name="Robben J."/>
            <person name="van der Schueren J."/>
            <person name="Grymonprez B."/>
            <person name="Chuang Y.-J."/>
            <person name="Vandenbussche F."/>
            <person name="Braeken M."/>
            <person name="Weltjens I."/>
            <person name="Voet M."/>
            <person name="Bastiaens I."/>
            <person name="Aert R."/>
            <person name="Defoor E."/>
            <person name="Weitzenegger T."/>
            <person name="Bothe G."/>
            <person name="Ramsperger U."/>
            <person name="Hilbert H."/>
            <person name="Braun M."/>
            <person name="Holzer E."/>
            <person name="Brandt A."/>
            <person name="Peters S."/>
            <person name="van Staveren M."/>
            <person name="Dirkse W."/>
            <person name="Mooijman P."/>
            <person name="Klein Lankhorst R."/>
            <person name="Rose M."/>
            <person name="Hauf J."/>
            <person name="Koetter P."/>
            <person name="Berneiser S."/>
            <person name="Hempel S."/>
            <person name="Feldpausch M."/>
            <person name="Lamberth S."/>
            <person name="Van den Daele H."/>
            <person name="De Keyser A."/>
            <person name="Buysshaert C."/>
            <person name="Gielen J."/>
            <person name="Villarroel R."/>
            <person name="De Clercq R."/>
            <person name="van Montagu M."/>
            <person name="Rogers J."/>
            <person name="Cronin A."/>
            <person name="Quail M.A."/>
            <person name="Bray-Allen S."/>
            <person name="Clark L."/>
            <person name="Doggett J."/>
            <person name="Hall S."/>
            <person name="Kay M."/>
            <person name="Lennard N."/>
            <person name="McLay K."/>
            <person name="Mayes R."/>
            <person name="Pettett A."/>
            <person name="Rajandream M.A."/>
            <person name="Lyne M."/>
            <person name="Benes V."/>
            <person name="Rechmann S."/>
            <person name="Borkova D."/>
            <person name="Bloecker H."/>
            <person name="Scharfe M."/>
            <person name="Grimm M."/>
            <person name="Loehnert T.-H."/>
            <person name="Dose S."/>
            <person name="de Haan M."/>
            <person name="Maarse A.C."/>
            <person name="Schaefer M."/>
            <person name="Mueller-Auer S."/>
            <person name="Gabel C."/>
            <person name="Fuchs M."/>
            <person name="Fartmann B."/>
            <person name="Granderath K."/>
            <person name="Dauner D."/>
            <person name="Herzl A."/>
            <person name="Neumann S."/>
            <person name="Argiriou A."/>
            <person name="Vitale D."/>
            <person name="Liguori R."/>
            <person name="Piravandi E."/>
            <person name="Massenet O."/>
            <person name="Quigley F."/>
            <person name="Clabauld G."/>
            <person name="Muendlein A."/>
            <person name="Felber R."/>
            <person name="Schnabl S."/>
            <person name="Hiller R."/>
            <person name="Schmidt W."/>
            <person name="Lecharny A."/>
            <person name="Aubourg S."/>
            <person name="Chefdor F."/>
            <person name="Cooke R."/>
            <person name="Berger C."/>
            <person name="Monfort A."/>
            <person name="Casacuberta E."/>
            <person name="Gibbons T."/>
            <person name="Weber N."/>
            <person name="Vandenbol M."/>
            <person name="Bargues M."/>
            <person name="Terol J."/>
            <person name="Torres A."/>
            <person name="Perez-Perez A."/>
            <person name="Purnelle B."/>
            <person name="Bent E."/>
            <person name="Johnson S."/>
            <person name="Tacon D."/>
            <person name="Jesse T."/>
            <person name="Heijnen L."/>
            <person name="Schwarz S."/>
            <person name="Scholler P."/>
            <person name="Heber S."/>
            <person name="Francs P."/>
            <person name="Bielke C."/>
            <person name="Frishman D."/>
            <person name="Haase D."/>
            <person name="Lemcke K."/>
            <person name="Mewes H.-W."/>
            <person name="Stocker S."/>
            <person name="Zaccaria P."/>
            <person name="Bevan M."/>
            <person name="Wilson R.K."/>
            <person name="de la Bastide M."/>
            <person name="Habermann K."/>
            <person name="Parnell L."/>
            <person name="Dedhia N."/>
            <person name="Gnoj L."/>
            <person name="Schutz K."/>
            <person name="Huang E."/>
            <person name="Spiegel L."/>
            <person name="Sekhon M."/>
            <person name="Murray J."/>
            <person name="Sheet P."/>
            <person name="Cordes M."/>
            <person name="Abu-Threideh J."/>
            <person name="Stoneking T."/>
            <person name="Kalicki J."/>
            <person name="Graves T."/>
            <person name="Harmon G."/>
            <person name="Edwards J."/>
            <person name="Latreille P."/>
            <person name="Courtney L."/>
            <person name="Cloud J."/>
            <person name="Abbott A."/>
            <person name="Scott K."/>
            <person name="Johnson D."/>
            <person name="Minx P."/>
            <person name="Bentley D."/>
            <person name="Fulton B."/>
            <person name="Miller N."/>
            <person name="Greco T."/>
            <person name="Kemp K."/>
            <person name="Kramer J."/>
            <person name="Fulton L."/>
            <person name="Mardis E."/>
            <person name="Dante M."/>
            <person name="Pepin K."/>
            <person name="Hillier L.W."/>
            <person name="Nelson J."/>
            <person name="Spieth J."/>
            <person name="Ryan E."/>
            <person name="Andrews S."/>
            <person name="Geisel C."/>
            <person name="Layman D."/>
            <person name="Du H."/>
            <person name="Ali J."/>
            <person name="Berghoff A."/>
            <person name="Jones K."/>
            <person name="Drone K."/>
            <person name="Cotton M."/>
            <person name="Joshu C."/>
            <person name="Antonoiu B."/>
            <person name="Zidanic M."/>
            <person name="Strong C."/>
            <person name="Sun H."/>
            <person name="Lamar B."/>
            <person name="Yordan C."/>
            <person name="Ma P."/>
            <person name="Zhong J."/>
            <person name="Preston R."/>
            <person name="Vil D."/>
            <person name="Shekher M."/>
            <person name="Matero A."/>
            <person name="Shah R."/>
            <person name="Swaby I.K."/>
            <person name="O'Shaughnessy A."/>
            <person name="Rodriguez M."/>
            <person name="Hoffman J."/>
            <person name="Till S."/>
            <person name="Granat S."/>
            <person name="Shohdy N."/>
            <person name="Hasegawa A."/>
            <person name="Hameed A."/>
            <person name="Lodhi M."/>
            <person name="Johnson A."/>
            <person name="Chen E."/>
            <person name="Marra M.A."/>
            <person name="Martienssen R."/>
            <person name="McCombie W.R."/>
        </authorList>
    </citation>
    <scope>NUCLEOTIDE SEQUENCE [LARGE SCALE GENOMIC DNA]</scope>
    <source>
        <strain>cv. Columbia</strain>
    </source>
</reference>
<reference key="2">
    <citation type="journal article" date="2017" name="Plant J.">
        <title>Araport11: a complete reannotation of the Arabidopsis thaliana reference genome.</title>
        <authorList>
            <person name="Cheng C.Y."/>
            <person name="Krishnakumar V."/>
            <person name="Chan A.P."/>
            <person name="Thibaud-Nissen F."/>
            <person name="Schobel S."/>
            <person name="Town C.D."/>
        </authorList>
    </citation>
    <scope>GENOME REANNOTATION</scope>
    <source>
        <strain>cv. Columbia</strain>
    </source>
</reference>
<reference key="3">
    <citation type="submission" date="2006-11" db="EMBL/GenBank/DDBJ databases">
        <title>Arabidopsis ORF clones.</title>
        <authorList>
            <person name="Bautista V.R."/>
            <person name="Kim C.J."/>
            <person name="Chen H."/>
            <person name="Quinitio C."/>
            <person name="Ecker J.R."/>
        </authorList>
    </citation>
    <scope>NUCLEOTIDE SEQUENCE [LARGE SCALE MRNA]</scope>
    <source>
        <strain>cv. Columbia</strain>
    </source>
</reference>
<reference key="4">
    <citation type="journal article" date="2006" name="Mol. Genet. Genomics">
        <title>Genome-wide analysis of the stress associated protein (SAP) gene family containing A20/AN1 zinc-finger(s) in rice and their phylogenetic relationship with Arabidopsis.</title>
        <authorList>
            <person name="Vij S."/>
            <person name="Tyagi A.K."/>
        </authorList>
    </citation>
    <scope>GENE FAMILY</scope>
</reference>
<sequence>MVNETEALPCEGGCGLYGTRVNNNLCSLCYKKSVLQHSPALRFEPETEQSQCCPPTNSPAVEEEPVKKRRCGICKRKVGMLGFKCRCGHMFCGSHRYPEEHSCPFDYKQSGRLALATQLPLIRADKLQRF</sequence>